<comment type="function">
    <text evidence="1">Catalyzes the formation of 5-methyl-uridine at position 1939 (m5U1939) in 23S rRNA.</text>
</comment>
<comment type="catalytic activity">
    <reaction evidence="1">
        <text>uridine(1939) in 23S rRNA + S-adenosyl-L-methionine = 5-methyluridine(1939) in 23S rRNA + S-adenosyl-L-homocysteine + H(+)</text>
        <dbReference type="Rhea" id="RHEA:42908"/>
        <dbReference type="Rhea" id="RHEA-COMP:10278"/>
        <dbReference type="Rhea" id="RHEA-COMP:10279"/>
        <dbReference type="ChEBI" id="CHEBI:15378"/>
        <dbReference type="ChEBI" id="CHEBI:57856"/>
        <dbReference type="ChEBI" id="CHEBI:59789"/>
        <dbReference type="ChEBI" id="CHEBI:65315"/>
        <dbReference type="ChEBI" id="CHEBI:74447"/>
        <dbReference type="EC" id="2.1.1.190"/>
    </reaction>
</comment>
<comment type="similarity">
    <text evidence="1">Belongs to the class I-like SAM-binding methyltransferase superfamily. RNA M5U methyltransferase family. RlmD subfamily.</text>
</comment>
<keyword id="KW-0004">4Fe-4S</keyword>
<keyword id="KW-0408">Iron</keyword>
<keyword id="KW-0411">Iron-sulfur</keyword>
<keyword id="KW-0479">Metal-binding</keyword>
<keyword id="KW-0489">Methyltransferase</keyword>
<keyword id="KW-0698">rRNA processing</keyword>
<keyword id="KW-0949">S-adenosyl-L-methionine</keyword>
<keyword id="KW-0808">Transferase</keyword>
<feature type="chain" id="PRO_1000084034" description="23S rRNA (uracil(1939)-C(5))-methyltransferase RlmD">
    <location>
        <begin position="1"/>
        <end position="444"/>
    </location>
</feature>
<feature type="domain" description="TRAM" evidence="1">
    <location>
        <begin position="5"/>
        <end position="64"/>
    </location>
</feature>
<feature type="active site" description="Nucleophile" evidence="1">
    <location>
        <position position="400"/>
    </location>
</feature>
<feature type="binding site" evidence="1">
    <location>
        <position position="77"/>
    </location>
    <ligand>
        <name>[4Fe-4S] cluster</name>
        <dbReference type="ChEBI" id="CHEBI:49883"/>
    </ligand>
</feature>
<feature type="binding site" evidence="1">
    <location>
        <position position="83"/>
    </location>
    <ligand>
        <name>[4Fe-4S] cluster</name>
        <dbReference type="ChEBI" id="CHEBI:49883"/>
    </ligand>
</feature>
<feature type="binding site" evidence="1">
    <location>
        <position position="86"/>
    </location>
    <ligand>
        <name>[4Fe-4S] cluster</name>
        <dbReference type="ChEBI" id="CHEBI:49883"/>
    </ligand>
</feature>
<feature type="binding site" evidence="1">
    <location>
        <position position="166"/>
    </location>
    <ligand>
        <name>[4Fe-4S] cluster</name>
        <dbReference type="ChEBI" id="CHEBI:49883"/>
    </ligand>
</feature>
<feature type="binding site" evidence="1">
    <location>
        <position position="276"/>
    </location>
    <ligand>
        <name>S-adenosyl-L-methionine</name>
        <dbReference type="ChEBI" id="CHEBI:59789"/>
    </ligand>
</feature>
<feature type="binding site" evidence="1">
    <location>
        <position position="305"/>
    </location>
    <ligand>
        <name>S-adenosyl-L-methionine</name>
        <dbReference type="ChEBI" id="CHEBI:59789"/>
    </ligand>
</feature>
<feature type="binding site" evidence="1">
    <location>
        <position position="310"/>
    </location>
    <ligand>
        <name>S-adenosyl-L-methionine</name>
        <dbReference type="ChEBI" id="CHEBI:59789"/>
    </ligand>
</feature>
<feature type="binding site" evidence="1">
    <location>
        <position position="326"/>
    </location>
    <ligand>
        <name>S-adenosyl-L-methionine</name>
        <dbReference type="ChEBI" id="CHEBI:59789"/>
    </ligand>
</feature>
<feature type="binding site" evidence="1">
    <location>
        <position position="353"/>
    </location>
    <ligand>
        <name>S-adenosyl-L-methionine</name>
        <dbReference type="ChEBI" id="CHEBI:59789"/>
    </ligand>
</feature>
<feature type="binding site" evidence="1">
    <location>
        <position position="374"/>
    </location>
    <ligand>
        <name>S-adenosyl-L-methionine</name>
        <dbReference type="ChEBI" id="CHEBI:59789"/>
    </ligand>
</feature>
<accession>A5IBU7</accession>
<sequence length="444" mass="50497">MRKVKPKLNLTSQTARIVNLSHDGRGIARVNGKATFIQGALPGEVVEFQYTRIKKDFDEGKLLSIVEPSTLRVEPKCPHYQMCGGCSLQHMSAEEQIRFKQSHLLDLLSRYGHTEPQSVLSPLTSHHWNYRNKARLSTRFVEKKQSTMVGFRERNNPRFITEINQCPILNSKIDTDIVHLRKLIDTMEDKHCIAQIEVAAGDNEVALIFRNLSPLTEQDELKIREFAQQFQYKVFLQPGGLDSVFCFYPSDAHAYLSYELPDYQITFQFHPNDFTQVNAELNRKMVTQAIQLMELKNSDIVLDLFCGLGNFSLPMAKHCSRVIGVEGNKNMVERAYMNAKSNHITNVDFYAANLDDVMEVRNLVNTSFSKVLIDPPRSGALEIVKQIDSIDPERIVYVSCNPITLARDTDILVNQKGYVLITAGVMDMFPHTAHVESIALFQKG</sequence>
<evidence type="ECO:0000255" key="1">
    <source>
        <dbReference type="HAMAP-Rule" id="MF_01010"/>
    </source>
</evidence>
<protein>
    <recommendedName>
        <fullName evidence="1">23S rRNA (uracil(1939)-C(5))-methyltransferase RlmD</fullName>
        <ecNumber evidence="1">2.1.1.190</ecNumber>
    </recommendedName>
    <alternativeName>
        <fullName evidence="1">23S rRNA(m5U1939)-methyltransferase</fullName>
    </alternativeName>
</protein>
<proteinExistence type="inferred from homology"/>
<dbReference type="EC" id="2.1.1.190" evidence="1"/>
<dbReference type="EMBL" id="CP000675">
    <property type="protein sequence ID" value="ABQ54847.1"/>
    <property type="molecule type" value="Genomic_DNA"/>
</dbReference>
<dbReference type="RefSeq" id="WP_011946460.1">
    <property type="nucleotide sequence ID" value="NC_009494.2"/>
</dbReference>
<dbReference type="SMR" id="A5IBU7"/>
<dbReference type="KEGG" id="lpc:LPC_0871"/>
<dbReference type="HOGENOM" id="CLU_014689_8_2_6"/>
<dbReference type="GO" id="GO:0051539">
    <property type="term" value="F:4 iron, 4 sulfur cluster binding"/>
    <property type="evidence" value="ECO:0007669"/>
    <property type="project" value="UniProtKB-KW"/>
</dbReference>
<dbReference type="GO" id="GO:0005506">
    <property type="term" value="F:iron ion binding"/>
    <property type="evidence" value="ECO:0007669"/>
    <property type="project" value="UniProtKB-UniRule"/>
</dbReference>
<dbReference type="GO" id="GO:0003723">
    <property type="term" value="F:RNA binding"/>
    <property type="evidence" value="ECO:0007669"/>
    <property type="project" value="InterPro"/>
</dbReference>
<dbReference type="GO" id="GO:0070041">
    <property type="term" value="F:rRNA (uridine-C5-)-methyltransferase activity"/>
    <property type="evidence" value="ECO:0007669"/>
    <property type="project" value="UniProtKB-UniRule"/>
</dbReference>
<dbReference type="GO" id="GO:0070475">
    <property type="term" value="P:rRNA base methylation"/>
    <property type="evidence" value="ECO:0007669"/>
    <property type="project" value="TreeGrafter"/>
</dbReference>
<dbReference type="CDD" id="cd02440">
    <property type="entry name" value="AdoMet_MTases"/>
    <property type="match status" value="1"/>
</dbReference>
<dbReference type="FunFam" id="3.40.50.150:FF:000009">
    <property type="entry name" value="23S rRNA (Uracil(1939)-C(5))-methyltransferase RlmD"/>
    <property type="match status" value="1"/>
</dbReference>
<dbReference type="FunFam" id="2.40.50.140:FF:000097">
    <property type="entry name" value="23S rRNA (uracil(1939)-C(5))-methyltransferase RlmD"/>
    <property type="match status" value="1"/>
</dbReference>
<dbReference type="Gene3D" id="2.40.50.1070">
    <property type="match status" value="1"/>
</dbReference>
<dbReference type="Gene3D" id="2.40.50.140">
    <property type="entry name" value="Nucleic acid-binding proteins"/>
    <property type="match status" value="1"/>
</dbReference>
<dbReference type="Gene3D" id="3.40.50.150">
    <property type="entry name" value="Vaccinia Virus protein VP39"/>
    <property type="match status" value="1"/>
</dbReference>
<dbReference type="HAMAP" id="MF_01010">
    <property type="entry name" value="23SrRNA_methyltr_RlmD"/>
    <property type="match status" value="1"/>
</dbReference>
<dbReference type="InterPro" id="IPR001566">
    <property type="entry name" value="23S_rRNA_MeTrfase_RlmD"/>
</dbReference>
<dbReference type="InterPro" id="IPR030390">
    <property type="entry name" value="MeTrfase_TrmA_AS"/>
</dbReference>
<dbReference type="InterPro" id="IPR030391">
    <property type="entry name" value="MeTrfase_TrmA_CS"/>
</dbReference>
<dbReference type="InterPro" id="IPR012340">
    <property type="entry name" value="NA-bd_OB-fold"/>
</dbReference>
<dbReference type="InterPro" id="IPR029063">
    <property type="entry name" value="SAM-dependent_MTases_sf"/>
</dbReference>
<dbReference type="InterPro" id="IPR002792">
    <property type="entry name" value="TRAM_dom"/>
</dbReference>
<dbReference type="InterPro" id="IPR010280">
    <property type="entry name" value="U5_MeTrfase_fam"/>
</dbReference>
<dbReference type="NCBIfam" id="NF009639">
    <property type="entry name" value="PRK13168.1"/>
    <property type="match status" value="1"/>
</dbReference>
<dbReference type="NCBIfam" id="TIGR00479">
    <property type="entry name" value="rumA"/>
    <property type="match status" value="1"/>
</dbReference>
<dbReference type="PANTHER" id="PTHR11061:SF49">
    <property type="entry name" value="23S RRNA (URACIL(1939)-C(5))-METHYLTRANSFERASE RLMD"/>
    <property type="match status" value="1"/>
</dbReference>
<dbReference type="PANTHER" id="PTHR11061">
    <property type="entry name" value="RNA M5U METHYLTRANSFERASE"/>
    <property type="match status" value="1"/>
</dbReference>
<dbReference type="Pfam" id="PF01938">
    <property type="entry name" value="TRAM"/>
    <property type="match status" value="1"/>
</dbReference>
<dbReference type="Pfam" id="PF05958">
    <property type="entry name" value="tRNA_U5-meth_tr"/>
    <property type="match status" value="1"/>
</dbReference>
<dbReference type="SUPFAM" id="SSF50249">
    <property type="entry name" value="Nucleic acid-binding proteins"/>
    <property type="match status" value="1"/>
</dbReference>
<dbReference type="SUPFAM" id="SSF53335">
    <property type="entry name" value="S-adenosyl-L-methionine-dependent methyltransferases"/>
    <property type="match status" value="1"/>
</dbReference>
<dbReference type="PROSITE" id="PS51687">
    <property type="entry name" value="SAM_MT_RNA_M5U"/>
    <property type="match status" value="1"/>
</dbReference>
<dbReference type="PROSITE" id="PS50926">
    <property type="entry name" value="TRAM"/>
    <property type="match status" value="1"/>
</dbReference>
<dbReference type="PROSITE" id="PS01230">
    <property type="entry name" value="TRMA_1"/>
    <property type="match status" value="1"/>
</dbReference>
<dbReference type="PROSITE" id="PS01231">
    <property type="entry name" value="TRMA_2"/>
    <property type="match status" value="1"/>
</dbReference>
<organism>
    <name type="scientific">Legionella pneumophila (strain Corby)</name>
    <dbReference type="NCBI Taxonomy" id="400673"/>
    <lineage>
        <taxon>Bacteria</taxon>
        <taxon>Pseudomonadati</taxon>
        <taxon>Pseudomonadota</taxon>
        <taxon>Gammaproteobacteria</taxon>
        <taxon>Legionellales</taxon>
        <taxon>Legionellaceae</taxon>
        <taxon>Legionella</taxon>
    </lineage>
</organism>
<name>RLMD_LEGPC</name>
<reference key="1">
    <citation type="submission" date="2006-11" db="EMBL/GenBank/DDBJ databases">
        <title>Identification and characterization of a new conjugation/ type IVA secretion system (trb/tra) of L. pneumophila Corby localized on a mobile genomic island.</title>
        <authorList>
            <person name="Gloeckner G."/>
            <person name="Albert-Weissenberger C."/>
            <person name="Weinmann E."/>
            <person name="Jacobi S."/>
            <person name="Schunder E."/>
            <person name="Steinert M."/>
            <person name="Buchrieser C."/>
            <person name="Hacker J."/>
            <person name="Heuner K."/>
        </authorList>
    </citation>
    <scope>NUCLEOTIDE SEQUENCE [LARGE SCALE GENOMIC DNA]</scope>
    <source>
        <strain>Corby</strain>
    </source>
</reference>
<gene>
    <name evidence="1" type="primary">rlmD</name>
    <name type="synonym">rumA</name>
    <name type="ordered locus">LPC_0871</name>
</gene>